<sequence length="332" mass="36185">MTKYNSGSSEMPAAQTIKQEYHNGYGQPTHPGYGFSAYSQQNPIAHPGQNPHQTLQNFFSRFNAVGDASAGNGGAASISANGSGSSCNYSHANHHPAELDKPLGMNMTPSPIYTTDYDDENSSLSSEEHVLAPLVCSSAQSSRPCLTWACKACKKKSVTVDRRKAATMRERRRLRKVNEAFEILKRRTSSNPNQRLPKVEILRNAIEYIESLEDLLQESSTTRDGDNLAPSLSGKSCQSDYLSSYAGAYLEDKLSFYNKHMEKYGQFTDFDGNANGSSLDCLNLIVQSINKSTTSPIQNKATPSASDTQSPPSSGATAPTSLHVNFKRKCST</sequence>
<accession>P22816</accession>
<accession>Q9VCJ1</accession>
<name>MYOD_DROME</name>
<protein>
    <recommendedName>
        <fullName>Myogenic-determination protein</fullName>
    </recommendedName>
    <alternativeName>
        <fullName>Protein nautilus</fullName>
    </alternativeName>
    <alternativeName>
        <fullName>dMyd</fullName>
    </alternativeName>
</protein>
<proteinExistence type="evidence at transcript level"/>
<gene>
    <name type="primary">nau</name>
    <name type="synonym">MYD</name>
    <name type="ORF">CG10250</name>
</gene>
<evidence type="ECO:0000255" key="1">
    <source>
        <dbReference type="PROSITE-ProRule" id="PRU00981"/>
    </source>
</evidence>
<evidence type="ECO:0000256" key="2">
    <source>
        <dbReference type="SAM" id="MobiDB-lite"/>
    </source>
</evidence>
<evidence type="ECO:0000269" key="3">
    <source>
    </source>
</evidence>
<evidence type="ECO:0000269" key="4">
    <source>
    </source>
</evidence>
<evidence type="ECO:0000305" key="5"/>
<organism>
    <name type="scientific">Drosophila melanogaster</name>
    <name type="common">Fruit fly</name>
    <dbReference type="NCBI Taxonomy" id="7227"/>
    <lineage>
        <taxon>Eukaryota</taxon>
        <taxon>Metazoa</taxon>
        <taxon>Ecdysozoa</taxon>
        <taxon>Arthropoda</taxon>
        <taxon>Hexapoda</taxon>
        <taxon>Insecta</taxon>
        <taxon>Pterygota</taxon>
        <taxon>Neoptera</taxon>
        <taxon>Endopterygota</taxon>
        <taxon>Diptera</taxon>
        <taxon>Brachycera</taxon>
        <taxon>Muscomorpha</taxon>
        <taxon>Ephydroidea</taxon>
        <taxon>Drosophilidae</taxon>
        <taxon>Drosophila</taxon>
        <taxon>Sophophora</taxon>
    </lineage>
</organism>
<reference key="1">
    <citation type="journal article" date="1991" name="Proc. Natl. Acad. Sci. U.S.A.">
        <title>The Drosophila homologue of vertebrate myogenic-determination genes encodes a transiently expressed nuclear protein marking primary myogenic cells.</title>
        <authorList>
            <person name="Paterson B.M."/>
            <person name="Walldorf U."/>
            <person name="Eldridge J."/>
            <person name="Duebendorfer A."/>
            <person name="Frasch M."/>
            <person name="Gehring W.J."/>
        </authorList>
    </citation>
    <scope>NUCLEOTIDE SEQUENCE [MRNA]</scope>
    <scope>SUBCELLULAR LOCATION</scope>
    <scope>DEVELOPMENTAL STAGE</scope>
</reference>
<reference key="2">
    <citation type="journal article" date="1990" name="Genes Dev.">
        <title>Expression of a MyoD family member prefigures muscle pattern in Drosophila embryos.</title>
        <authorList>
            <person name="Michelson A.M."/>
            <person name="Abmayr S.M."/>
            <person name="Bate M."/>
            <person name="Arias A.M."/>
            <person name="Maniatis T."/>
        </authorList>
    </citation>
    <scope>NUCLEOTIDE SEQUENCE [MRNA]</scope>
    <scope>FUNCTION</scope>
    <scope>DEVELOPMENTAL STAGE</scope>
    <source>
        <tissue>Embryo</tissue>
    </source>
</reference>
<reference key="3">
    <citation type="journal article" date="2000" name="Science">
        <title>The genome sequence of Drosophila melanogaster.</title>
        <authorList>
            <person name="Adams M.D."/>
            <person name="Celniker S.E."/>
            <person name="Holt R.A."/>
            <person name="Evans C.A."/>
            <person name="Gocayne J.D."/>
            <person name="Amanatides P.G."/>
            <person name="Scherer S.E."/>
            <person name="Li P.W."/>
            <person name="Hoskins R.A."/>
            <person name="Galle R.F."/>
            <person name="George R.A."/>
            <person name="Lewis S.E."/>
            <person name="Richards S."/>
            <person name="Ashburner M."/>
            <person name="Henderson S.N."/>
            <person name="Sutton G.G."/>
            <person name="Wortman J.R."/>
            <person name="Yandell M.D."/>
            <person name="Zhang Q."/>
            <person name="Chen L.X."/>
            <person name="Brandon R.C."/>
            <person name="Rogers Y.-H.C."/>
            <person name="Blazej R.G."/>
            <person name="Champe M."/>
            <person name="Pfeiffer B.D."/>
            <person name="Wan K.H."/>
            <person name="Doyle C."/>
            <person name="Baxter E.G."/>
            <person name="Helt G."/>
            <person name="Nelson C.R."/>
            <person name="Miklos G.L.G."/>
            <person name="Abril J.F."/>
            <person name="Agbayani A."/>
            <person name="An H.-J."/>
            <person name="Andrews-Pfannkoch C."/>
            <person name="Baldwin D."/>
            <person name="Ballew R.M."/>
            <person name="Basu A."/>
            <person name="Baxendale J."/>
            <person name="Bayraktaroglu L."/>
            <person name="Beasley E.M."/>
            <person name="Beeson K.Y."/>
            <person name="Benos P.V."/>
            <person name="Berman B.P."/>
            <person name="Bhandari D."/>
            <person name="Bolshakov S."/>
            <person name="Borkova D."/>
            <person name="Botchan M.R."/>
            <person name="Bouck J."/>
            <person name="Brokstein P."/>
            <person name="Brottier P."/>
            <person name="Burtis K.C."/>
            <person name="Busam D.A."/>
            <person name="Butler H."/>
            <person name="Cadieu E."/>
            <person name="Center A."/>
            <person name="Chandra I."/>
            <person name="Cherry J.M."/>
            <person name="Cawley S."/>
            <person name="Dahlke C."/>
            <person name="Davenport L.B."/>
            <person name="Davies P."/>
            <person name="de Pablos B."/>
            <person name="Delcher A."/>
            <person name="Deng Z."/>
            <person name="Mays A.D."/>
            <person name="Dew I."/>
            <person name="Dietz S.M."/>
            <person name="Dodson K."/>
            <person name="Doup L.E."/>
            <person name="Downes M."/>
            <person name="Dugan-Rocha S."/>
            <person name="Dunkov B.C."/>
            <person name="Dunn P."/>
            <person name="Durbin K.J."/>
            <person name="Evangelista C.C."/>
            <person name="Ferraz C."/>
            <person name="Ferriera S."/>
            <person name="Fleischmann W."/>
            <person name="Fosler C."/>
            <person name="Gabrielian A.E."/>
            <person name="Garg N.S."/>
            <person name="Gelbart W.M."/>
            <person name="Glasser K."/>
            <person name="Glodek A."/>
            <person name="Gong F."/>
            <person name="Gorrell J.H."/>
            <person name="Gu Z."/>
            <person name="Guan P."/>
            <person name="Harris M."/>
            <person name="Harris N.L."/>
            <person name="Harvey D.A."/>
            <person name="Heiman T.J."/>
            <person name="Hernandez J.R."/>
            <person name="Houck J."/>
            <person name="Hostin D."/>
            <person name="Houston K.A."/>
            <person name="Howland T.J."/>
            <person name="Wei M.-H."/>
            <person name="Ibegwam C."/>
            <person name="Jalali M."/>
            <person name="Kalush F."/>
            <person name="Karpen G.H."/>
            <person name="Ke Z."/>
            <person name="Kennison J.A."/>
            <person name="Ketchum K.A."/>
            <person name="Kimmel B.E."/>
            <person name="Kodira C.D."/>
            <person name="Kraft C.L."/>
            <person name="Kravitz S."/>
            <person name="Kulp D."/>
            <person name="Lai Z."/>
            <person name="Lasko P."/>
            <person name="Lei Y."/>
            <person name="Levitsky A.A."/>
            <person name="Li J.H."/>
            <person name="Li Z."/>
            <person name="Liang Y."/>
            <person name="Lin X."/>
            <person name="Liu X."/>
            <person name="Mattei B."/>
            <person name="McIntosh T.C."/>
            <person name="McLeod M.P."/>
            <person name="McPherson D."/>
            <person name="Merkulov G."/>
            <person name="Milshina N.V."/>
            <person name="Mobarry C."/>
            <person name="Morris J."/>
            <person name="Moshrefi A."/>
            <person name="Mount S.M."/>
            <person name="Moy M."/>
            <person name="Murphy B."/>
            <person name="Murphy L."/>
            <person name="Muzny D.M."/>
            <person name="Nelson D.L."/>
            <person name="Nelson D.R."/>
            <person name="Nelson K.A."/>
            <person name="Nixon K."/>
            <person name="Nusskern D.R."/>
            <person name="Pacleb J.M."/>
            <person name="Palazzolo M."/>
            <person name="Pittman G.S."/>
            <person name="Pan S."/>
            <person name="Pollard J."/>
            <person name="Puri V."/>
            <person name="Reese M.G."/>
            <person name="Reinert K."/>
            <person name="Remington K."/>
            <person name="Saunders R.D.C."/>
            <person name="Scheeler F."/>
            <person name="Shen H."/>
            <person name="Shue B.C."/>
            <person name="Siden-Kiamos I."/>
            <person name="Simpson M."/>
            <person name="Skupski M.P."/>
            <person name="Smith T.J."/>
            <person name="Spier E."/>
            <person name="Spradling A.C."/>
            <person name="Stapleton M."/>
            <person name="Strong R."/>
            <person name="Sun E."/>
            <person name="Svirskas R."/>
            <person name="Tector C."/>
            <person name="Turner R."/>
            <person name="Venter E."/>
            <person name="Wang A.H."/>
            <person name="Wang X."/>
            <person name="Wang Z.-Y."/>
            <person name="Wassarman D.A."/>
            <person name="Weinstock G.M."/>
            <person name="Weissenbach J."/>
            <person name="Williams S.M."/>
            <person name="Woodage T."/>
            <person name="Worley K.C."/>
            <person name="Wu D."/>
            <person name="Yang S."/>
            <person name="Yao Q.A."/>
            <person name="Ye J."/>
            <person name="Yeh R.-F."/>
            <person name="Zaveri J.S."/>
            <person name="Zhan M."/>
            <person name="Zhang G."/>
            <person name="Zhao Q."/>
            <person name="Zheng L."/>
            <person name="Zheng X.H."/>
            <person name="Zhong F.N."/>
            <person name="Zhong W."/>
            <person name="Zhou X."/>
            <person name="Zhu S.C."/>
            <person name="Zhu X."/>
            <person name="Smith H.O."/>
            <person name="Gibbs R.A."/>
            <person name="Myers E.W."/>
            <person name="Rubin G.M."/>
            <person name="Venter J.C."/>
        </authorList>
    </citation>
    <scope>NUCLEOTIDE SEQUENCE [LARGE SCALE GENOMIC DNA]</scope>
    <source>
        <strain>Berkeley</strain>
    </source>
</reference>
<reference key="4">
    <citation type="journal article" date="2002" name="Genome Biol.">
        <title>Annotation of the Drosophila melanogaster euchromatic genome: a systematic review.</title>
        <authorList>
            <person name="Misra S."/>
            <person name="Crosby M.A."/>
            <person name="Mungall C.J."/>
            <person name="Matthews B.B."/>
            <person name="Campbell K.S."/>
            <person name="Hradecky P."/>
            <person name="Huang Y."/>
            <person name="Kaminker J.S."/>
            <person name="Millburn G.H."/>
            <person name="Prochnik S.E."/>
            <person name="Smith C.D."/>
            <person name="Tupy J.L."/>
            <person name="Whitfield E.J."/>
            <person name="Bayraktaroglu L."/>
            <person name="Berman B.P."/>
            <person name="Bettencourt B.R."/>
            <person name="Celniker S.E."/>
            <person name="de Grey A.D.N.J."/>
            <person name="Drysdale R.A."/>
            <person name="Harris N.L."/>
            <person name="Richter J."/>
            <person name="Russo S."/>
            <person name="Schroeder A.J."/>
            <person name="Shu S.Q."/>
            <person name="Stapleton M."/>
            <person name="Yamada C."/>
            <person name="Ashburner M."/>
            <person name="Gelbart W.M."/>
            <person name="Rubin G.M."/>
            <person name="Lewis S.E."/>
        </authorList>
    </citation>
    <scope>GENOME REANNOTATION</scope>
    <source>
        <strain>Berkeley</strain>
    </source>
</reference>
<comment type="function">
    <text evidence="4">May play an important role in the early development of muscle.</text>
</comment>
<comment type="subunit">
    <text>Efficient DNA binding requires dimerization with another bHLH protein.</text>
</comment>
<comment type="subcellular location">
    <subcellularLocation>
        <location evidence="1 3">Nucleus</location>
    </subcellularLocation>
</comment>
<comment type="developmental stage">
    <text evidence="3 4">Initially localized to segmentally repeated clusters of mesodermal cells, and subsequently in at least a subset of growing muscle precursors and mature muscle fibers that exhibit distinct segmental differences.</text>
</comment>
<keyword id="KW-0217">Developmental protein</keyword>
<keyword id="KW-0221">Differentiation</keyword>
<keyword id="KW-0238">DNA-binding</keyword>
<keyword id="KW-0517">Myogenesis</keyword>
<keyword id="KW-0539">Nucleus</keyword>
<keyword id="KW-1185">Reference proteome</keyword>
<keyword id="KW-0804">Transcription</keyword>
<keyword id="KW-0805">Transcription regulation</keyword>
<feature type="chain" id="PRO_0000127374" description="Myogenic-determination protein">
    <location>
        <begin position="1"/>
        <end position="332"/>
    </location>
</feature>
<feature type="domain" description="bHLH" evidence="1">
    <location>
        <begin position="161"/>
        <end position="212"/>
    </location>
</feature>
<feature type="region of interest" description="Disordered" evidence="2">
    <location>
        <begin position="22"/>
        <end position="54"/>
    </location>
</feature>
<feature type="region of interest" description="Disordered" evidence="2">
    <location>
        <begin position="293"/>
        <end position="332"/>
    </location>
</feature>
<feature type="compositionally biased region" description="Polar residues" evidence="2">
    <location>
        <begin position="293"/>
        <end position="309"/>
    </location>
</feature>
<feature type="compositionally biased region" description="Low complexity" evidence="2">
    <location>
        <begin position="310"/>
        <end position="321"/>
    </location>
</feature>
<feature type="sequence conflict" description="In Ref. 2; CAA39629." evidence="5" ref="2">
    <original>PT</original>
    <variation>QA</variation>
    <location>
        <begin position="28"/>
        <end position="29"/>
    </location>
</feature>
<feature type="sequence conflict" description="In Ref. 3; AAF56168." evidence="5" ref="3">
    <original>HPA</original>
    <variation>NPV</variation>
    <location>
        <begin position="95"/>
        <end position="97"/>
    </location>
</feature>
<feature type="sequence conflict" description="In Ref. 1; AAA28477." evidence="5" ref="1">
    <original>L</original>
    <variation>H</variation>
    <location>
        <position position="131"/>
    </location>
</feature>
<dbReference type="EMBL" id="M68897">
    <property type="protein sequence ID" value="AAA28477.1"/>
    <property type="molecule type" value="mRNA"/>
</dbReference>
<dbReference type="EMBL" id="X56161">
    <property type="protein sequence ID" value="CAA39629.1"/>
    <property type="molecule type" value="mRNA"/>
</dbReference>
<dbReference type="EMBL" id="AE014297">
    <property type="protein sequence ID" value="AAF56168.1"/>
    <property type="molecule type" value="Genomic_DNA"/>
</dbReference>
<dbReference type="PIR" id="A36663">
    <property type="entry name" value="A36663"/>
</dbReference>
<dbReference type="RefSeq" id="NP_476650.1">
    <property type="nucleotide sequence ID" value="NM_057302.3"/>
</dbReference>
<dbReference type="SMR" id="P22816"/>
<dbReference type="BioGRID" id="67737">
    <property type="interactions" value="19"/>
</dbReference>
<dbReference type="FunCoup" id="P22816">
    <property type="interactions" value="38"/>
</dbReference>
<dbReference type="IntAct" id="P22816">
    <property type="interactions" value="5"/>
</dbReference>
<dbReference type="STRING" id="7227.FBpp0083863"/>
<dbReference type="PaxDb" id="7227-FBpp0083863"/>
<dbReference type="DNASU" id="42799"/>
<dbReference type="EnsemblMetazoa" id="FBtr0084472">
    <property type="protein sequence ID" value="FBpp0083863"/>
    <property type="gene ID" value="FBgn0002922"/>
</dbReference>
<dbReference type="GeneID" id="42799"/>
<dbReference type="KEGG" id="dme:Dmel_CG10250"/>
<dbReference type="AGR" id="FB:FBgn0002922"/>
<dbReference type="CTD" id="42799"/>
<dbReference type="FlyBase" id="FBgn0002922">
    <property type="gene designation" value="nau"/>
</dbReference>
<dbReference type="VEuPathDB" id="VectorBase:FBgn0002922"/>
<dbReference type="eggNOG" id="KOG3960">
    <property type="taxonomic scope" value="Eukaryota"/>
</dbReference>
<dbReference type="GeneTree" id="ENSGT00950000182959"/>
<dbReference type="HOGENOM" id="CLU_804791_0_0_1"/>
<dbReference type="InParanoid" id="P22816"/>
<dbReference type="OrthoDB" id="10049614at2759"/>
<dbReference type="PhylomeDB" id="P22816"/>
<dbReference type="Reactome" id="R-DME-525793">
    <property type="pathway name" value="Myogenesis"/>
</dbReference>
<dbReference type="SignaLink" id="P22816"/>
<dbReference type="BioGRID-ORCS" id="42799">
    <property type="hits" value="0 hits in 3 CRISPR screens"/>
</dbReference>
<dbReference type="GenomeRNAi" id="42799"/>
<dbReference type="PRO" id="PR:P22816"/>
<dbReference type="Proteomes" id="UP000000803">
    <property type="component" value="Chromosome 3R"/>
</dbReference>
<dbReference type="Bgee" id="FBgn0002922">
    <property type="expression patterns" value="Expressed in muscle cell in insect leg and 7 other cell types or tissues"/>
</dbReference>
<dbReference type="ExpressionAtlas" id="P22816">
    <property type="expression patterns" value="baseline and differential"/>
</dbReference>
<dbReference type="GO" id="GO:0005737">
    <property type="term" value="C:cytoplasm"/>
    <property type="evidence" value="ECO:0000314"/>
    <property type="project" value="FlyBase"/>
</dbReference>
<dbReference type="GO" id="GO:0005634">
    <property type="term" value="C:nucleus"/>
    <property type="evidence" value="ECO:0000314"/>
    <property type="project" value="FlyBase"/>
</dbReference>
<dbReference type="GO" id="GO:0000981">
    <property type="term" value="F:DNA-binding transcription factor activity, RNA polymerase II-specific"/>
    <property type="evidence" value="ECO:0000318"/>
    <property type="project" value="GO_Central"/>
</dbReference>
<dbReference type="GO" id="GO:0046983">
    <property type="term" value="F:protein dimerization activity"/>
    <property type="evidence" value="ECO:0007669"/>
    <property type="project" value="InterPro"/>
</dbReference>
<dbReference type="GO" id="GO:0000978">
    <property type="term" value="F:RNA polymerase II cis-regulatory region sequence-specific DNA binding"/>
    <property type="evidence" value="ECO:0000318"/>
    <property type="project" value="GO_Central"/>
</dbReference>
<dbReference type="GO" id="GO:0030154">
    <property type="term" value="P:cell differentiation"/>
    <property type="evidence" value="ECO:0007669"/>
    <property type="project" value="UniProtKB-KW"/>
</dbReference>
<dbReference type="GO" id="GO:0016204">
    <property type="term" value="P:determination of muscle attachment site"/>
    <property type="evidence" value="ECO:0000315"/>
    <property type="project" value="FlyBase"/>
</dbReference>
<dbReference type="GO" id="GO:0007526">
    <property type="term" value="P:larval somatic muscle development"/>
    <property type="evidence" value="ECO:0000315"/>
    <property type="project" value="FlyBase"/>
</dbReference>
<dbReference type="GO" id="GO:0007517">
    <property type="term" value="P:muscle organ development"/>
    <property type="evidence" value="ECO:0000315"/>
    <property type="project" value="FlyBase"/>
</dbReference>
<dbReference type="GO" id="GO:0045663">
    <property type="term" value="P:positive regulation of myoblast differentiation"/>
    <property type="evidence" value="ECO:0000318"/>
    <property type="project" value="GO_Central"/>
</dbReference>
<dbReference type="GO" id="GO:0006357">
    <property type="term" value="P:regulation of transcription by RNA polymerase II"/>
    <property type="evidence" value="ECO:0000318"/>
    <property type="project" value="GO_Central"/>
</dbReference>
<dbReference type="CDD" id="cd19699">
    <property type="entry name" value="bHLH_TS_dMYOD_like"/>
    <property type="match status" value="1"/>
</dbReference>
<dbReference type="FunFam" id="4.10.280.10:FF:000005">
    <property type="entry name" value="Myogenic factor"/>
    <property type="match status" value="1"/>
</dbReference>
<dbReference type="Gene3D" id="4.10.280.10">
    <property type="entry name" value="Helix-loop-helix DNA-binding domain"/>
    <property type="match status" value="1"/>
</dbReference>
<dbReference type="InterPro" id="IPR011598">
    <property type="entry name" value="bHLH_dom"/>
</dbReference>
<dbReference type="InterPro" id="IPR036638">
    <property type="entry name" value="HLH_DNA-bd_sf"/>
</dbReference>
<dbReference type="InterPro" id="IPR002546">
    <property type="entry name" value="MyoD_N"/>
</dbReference>
<dbReference type="InterPro" id="IPR039704">
    <property type="entry name" value="Myogenic_factor"/>
</dbReference>
<dbReference type="PANTHER" id="PTHR11534">
    <property type="entry name" value="MYOGENIC FACTOR"/>
    <property type="match status" value="1"/>
</dbReference>
<dbReference type="PANTHER" id="PTHR11534:SF9">
    <property type="entry name" value="MYOGENIC-DETERMINATION PROTEIN"/>
    <property type="match status" value="1"/>
</dbReference>
<dbReference type="Pfam" id="PF01586">
    <property type="entry name" value="Basic"/>
    <property type="match status" value="1"/>
</dbReference>
<dbReference type="Pfam" id="PF00010">
    <property type="entry name" value="HLH"/>
    <property type="match status" value="1"/>
</dbReference>
<dbReference type="SMART" id="SM00520">
    <property type="entry name" value="BASIC"/>
    <property type="match status" value="1"/>
</dbReference>
<dbReference type="SMART" id="SM00353">
    <property type="entry name" value="HLH"/>
    <property type="match status" value="1"/>
</dbReference>
<dbReference type="SUPFAM" id="SSF47459">
    <property type="entry name" value="HLH, helix-loop-helix DNA-binding domain"/>
    <property type="match status" value="1"/>
</dbReference>
<dbReference type="PROSITE" id="PS50888">
    <property type="entry name" value="BHLH"/>
    <property type="match status" value="1"/>
</dbReference>